<evidence type="ECO:0000255" key="1"/>
<evidence type="ECO:0000255" key="2">
    <source>
        <dbReference type="PROSITE-ProRule" id="PRU01339"/>
    </source>
</evidence>
<evidence type="ECO:0000269" key="3">
    <source>
    </source>
</evidence>
<evidence type="ECO:0000269" key="4">
    <source>
    </source>
</evidence>
<evidence type="ECO:0000269" key="5">
    <source>
    </source>
</evidence>
<evidence type="ECO:0000269" key="6">
    <source>
    </source>
</evidence>
<evidence type="ECO:0000269" key="7">
    <source>
    </source>
</evidence>
<evidence type="ECO:0000269" key="8">
    <source>
    </source>
</evidence>
<evidence type="ECO:0000269" key="9">
    <source>
    </source>
</evidence>
<evidence type="ECO:0000303" key="10">
    <source>
    </source>
</evidence>
<evidence type="ECO:0000303" key="11">
    <source>
    </source>
</evidence>
<evidence type="ECO:0000303" key="12">
    <source>
    </source>
</evidence>
<evidence type="ECO:0000305" key="13"/>
<evidence type="ECO:0000305" key="14">
    <source>
    </source>
</evidence>
<evidence type="ECO:0000305" key="15">
    <source>
    </source>
</evidence>
<evidence type="ECO:0007829" key="16">
    <source>
        <dbReference type="PDB" id="2N6J"/>
    </source>
</evidence>
<evidence type="ECO:0007829" key="17">
    <source>
        <dbReference type="PDB" id="5A0R"/>
    </source>
</evidence>
<evidence type="ECO:0007829" key="18">
    <source>
        <dbReference type="PDB" id="5N12"/>
    </source>
</evidence>
<evidence type="ECO:0007829" key="19">
    <source>
        <dbReference type="PDB" id="6R4Z"/>
    </source>
</evidence>
<evidence type="ECO:0007829" key="20">
    <source>
        <dbReference type="PDB" id="6R53"/>
    </source>
</evidence>
<dbReference type="EC" id="3.4.24.89" evidence="5 8"/>
<dbReference type="EMBL" id="AM180355">
    <property type="protein sequence ID" value="CAJ69718.1"/>
    <property type="molecule type" value="Genomic_DNA"/>
</dbReference>
<dbReference type="RefSeq" id="WP_011861706.1">
    <property type="nucleotide sequence ID" value="NZ_JAUPES010000033.1"/>
</dbReference>
<dbReference type="RefSeq" id="YP_001089343.1">
    <property type="nucleotide sequence ID" value="NC_009089.1"/>
</dbReference>
<dbReference type="PDB" id="2N6J">
    <property type="method" value="NMR"/>
    <property type="chains" value="A=27-220"/>
</dbReference>
<dbReference type="PDB" id="5A0P">
    <property type="method" value="X-ray"/>
    <property type="resolution" value="1.40 A"/>
    <property type="chains" value="A/B=27-220"/>
</dbReference>
<dbReference type="PDB" id="5A0R">
    <property type="method" value="X-ray"/>
    <property type="resolution" value="1.25 A"/>
    <property type="chains" value="A/B=27-220"/>
</dbReference>
<dbReference type="PDB" id="5A0S">
    <property type="method" value="X-ray"/>
    <property type="resolution" value="2.56 A"/>
    <property type="chains" value="A/B=27-220"/>
</dbReference>
<dbReference type="PDB" id="5A0X">
    <property type="method" value="X-ray"/>
    <property type="resolution" value="1.70 A"/>
    <property type="chains" value="A/B=27-220"/>
</dbReference>
<dbReference type="PDB" id="5N12">
    <property type="method" value="X-ray"/>
    <property type="resolution" value="1.38 A"/>
    <property type="chains" value="A/B=27-220"/>
</dbReference>
<dbReference type="PDB" id="6R4W">
    <property type="method" value="X-ray"/>
    <property type="resolution" value="1.39 A"/>
    <property type="chains" value="A/B=27-220"/>
</dbReference>
<dbReference type="PDB" id="6R4X">
    <property type="method" value="X-ray"/>
    <property type="resolution" value="1.83 A"/>
    <property type="chains" value="A/B=27-220"/>
</dbReference>
<dbReference type="PDB" id="6R4Y">
    <property type="method" value="X-ray"/>
    <property type="resolution" value="1.45 A"/>
    <property type="chains" value="A/B=27-220"/>
</dbReference>
<dbReference type="PDB" id="6R4Z">
    <property type="method" value="X-ray"/>
    <property type="resolution" value="1.05 A"/>
    <property type="chains" value="A/B=27-220"/>
</dbReference>
<dbReference type="PDB" id="6R50">
    <property type="method" value="X-ray"/>
    <property type="resolution" value="1.81 A"/>
    <property type="chains" value="A/B=27-220"/>
</dbReference>
<dbReference type="PDB" id="6R51">
    <property type="method" value="X-ray"/>
    <property type="resolution" value="1.94 A"/>
    <property type="chains" value="A/B/C=27-220"/>
</dbReference>
<dbReference type="PDB" id="6R52">
    <property type="method" value="X-ray"/>
    <property type="resolution" value="2.02 A"/>
    <property type="chains" value="A/B=24-220"/>
</dbReference>
<dbReference type="PDB" id="6R53">
    <property type="method" value="X-ray"/>
    <property type="resolution" value="1.80 A"/>
    <property type="chains" value="A/B=24-220"/>
</dbReference>
<dbReference type="PDB" id="6R54">
    <property type="method" value="X-ray"/>
    <property type="resolution" value="1.42 A"/>
    <property type="chains" value="A/B=27-220"/>
</dbReference>
<dbReference type="PDB" id="6R55">
    <property type="method" value="X-ray"/>
    <property type="resolution" value="1.40 A"/>
    <property type="chains" value="A/B=27-220"/>
</dbReference>
<dbReference type="PDB" id="6R56">
    <property type="method" value="X-ray"/>
    <property type="resolution" value="1.77 A"/>
    <property type="chains" value="A/B=27-220"/>
</dbReference>
<dbReference type="PDB" id="6R57">
    <property type="method" value="X-ray"/>
    <property type="resolution" value="1.90 A"/>
    <property type="chains" value="A/B=27-220"/>
</dbReference>
<dbReference type="PDB" id="6R58">
    <property type="method" value="X-ray"/>
    <property type="resolution" value="1.90 A"/>
    <property type="chains" value="A/B/C/D=27-220"/>
</dbReference>
<dbReference type="PDB" id="6R59">
    <property type="method" value="X-ray"/>
    <property type="resolution" value="1.65 A"/>
    <property type="chains" value="A/B=27-220"/>
</dbReference>
<dbReference type="PDB" id="6R5A">
    <property type="method" value="X-ray"/>
    <property type="resolution" value="1.48 A"/>
    <property type="chains" value="A/B=24-220"/>
</dbReference>
<dbReference type="PDB" id="6R5B">
    <property type="method" value="X-ray"/>
    <property type="resolution" value="2.06 A"/>
    <property type="chains" value="A/B=27-220"/>
</dbReference>
<dbReference type="PDB" id="6R5C">
    <property type="method" value="X-ray"/>
    <property type="resolution" value="1.88 A"/>
    <property type="chains" value="A/B=27-220"/>
</dbReference>
<dbReference type="PDBsum" id="2N6J"/>
<dbReference type="PDBsum" id="5A0P"/>
<dbReference type="PDBsum" id="5A0R"/>
<dbReference type="PDBsum" id="5A0S"/>
<dbReference type="PDBsum" id="5A0X"/>
<dbReference type="PDBsum" id="5N12"/>
<dbReference type="PDBsum" id="6R4W"/>
<dbReference type="PDBsum" id="6R4X"/>
<dbReference type="PDBsum" id="6R4Y"/>
<dbReference type="PDBsum" id="6R4Z"/>
<dbReference type="PDBsum" id="6R50"/>
<dbReference type="PDBsum" id="6R51"/>
<dbReference type="PDBsum" id="6R52"/>
<dbReference type="PDBsum" id="6R53"/>
<dbReference type="PDBsum" id="6R54"/>
<dbReference type="PDBsum" id="6R55"/>
<dbReference type="PDBsum" id="6R56"/>
<dbReference type="PDBsum" id="6R57"/>
<dbReference type="PDBsum" id="6R58"/>
<dbReference type="PDBsum" id="6R59"/>
<dbReference type="PDBsum" id="6R5A"/>
<dbReference type="PDBsum" id="6R5B"/>
<dbReference type="PDBsum" id="6R5C"/>
<dbReference type="BMRB" id="Q183R7"/>
<dbReference type="SMR" id="Q183R7"/>
<dbReference type="STRING" id="272563.CD630_28300"/>
<dbReference type="MEROPS" id="M34.002"/>
<dbReference type="DNASU" id="4913008"/>
<dbReference type="EnsemblBacteria" id="CAJ69718">
    <property type="protein sequence ID" value="CAJ69718"/>
    <property type="gene ID" value="CD630_28300"/>
</dbReference>
<dbReference type="GeneID" id="66355238"/>
<dbReference type="KEGG" id="cdf:CD630_28300"/>
<dbReference type="KEGG" id="pdc:CDIF630_03094"/>
<dbReference type="PATRIC" id="fig|272563.120.peg.2981"/>
<dbReference type="eggNOG" id="ENOG5030AA8">
    <property type="taxonomic scope" value="Bacteria"/>
</dbReference>
<dbReference type="OrthoDB" id="2615003at2"/>
<dbReference type="BioCyc" id="PDIF272563:G12WB-2990-MONOMER"/>
<dbReference type="BRENDA" id="3.4.24.89">
    <property type="organism ID" value="1473"/>
</dbReference>
<dbReference type="EvolutionaryTrace" id="Q183R7"/>
<dbReference type="Proteomes" id="UP000001978">
    <property type="component" value="Chromosome"/>
</dbReference>
<dbReference type="GO" id="GO:0005576">
    <property type="term" value="C:extracellular region"/>
    <property type="evidence" value="ECO:0007669"/>
    <property type="project" value="UniProtKB-SubCell"/>
</dbReference>
<dbReference type="GO" id="GO:0046872">
    <property type="term" value="F:metal ion binding"/>
    <property type="evidence" value="ECO:0007669"/>
    <property type="project" value="UniProtKB-KW"/>
</dbReference>
<dbReference type="GO" id="GO:0008237">
    <property type="term" value="F:metallopeptidase activity"/>
    <property type="evidence" value="ECO:0007669"/>
    <property type="project" value="UniProtKB-KW"/>
</dbReference>
<dbReference type="GO" id="GO:0006508">
    <property type="term" value="P:proteolysis"/>
    <property type="evidence" value="ECO:0007669"/>
    <property type="project" value="UniProtKB-KW"/>
</dbReference>
<dbReference type="CDD" id="cd20183">
    <property type="entry name" value="M34_PPEP"/>
    <property type="match status" value="1"/>
</dbReference>
<dbReference type="Gene3D" id="3.40.390.10">
    <property type="entry name" value="Collagenase (Catalytic Domain)"/>
    <property type="match status" value="1"/>
</dbReference>
<dbReference type="InterPro" id="IPR014781">
    <property type="entry name" value="Anthrax_toxin_lethal/edema_N/C"/>
</dbReference>
<dbReference type="InterPro" id="IPR047568">
    <property type="entry name" value="ATLF-like_dom"/>
</dbReference>
<dbReference type="InterPro" id="IPR024079">
    <property type="entry name" value="MetalloPept_cat_dom_sf"/>
</dbReference>
<dbReference type="Pfam" id="PF07737">
    <property type="entry name" value="ATLF"/>
    <property type="match status" value="1"/>
</dbReference>
<dbReference type="SUPFAM" id="SSF55486">
    <property type="entry name" value="Metalloproteases ('zincins'), catalytic domain"/>
    <property type="match status" value="1"/>
</dbReference>
<dbReference type="PROSITE" id="PS51995">
    <property type="entry name" value="ATLF"/>
    <property type="match status" value="1"/>
</dbReference>
<sequence length="220" mass="24319">MRPSKKLLIAIISIFLISSVPVSAHADSTTIQQNKDTLSQIVVFPTGNYDKNEANAMVNRLANIDGKYLNALKQNNLKIKLLSGKLTDEKEYAYLKGVVPKGWEGTGKTWDDVPGLGGSTVALRIGFSNKGKGHDAINLELHETAHAIDHIVLNDISKSAQFKQIFAKEGRSLGNVNYLGVYPEEFFAESFAYYYLNQDTNSKLKSACPQTYSFLQNLAK</sequence>
<feature type="signal peptide" evidence="1">
    <location>
        <begin position="1"/>
        <end position="26"/>
    </location>
</feature>
<feature type="chain" id="PRO_0000429768" description="Pro-Pro endopeptidase">
    <location>
        <begin position="27"/>
        <end position="220"/>
    </location>
</feature>
<feature type="domain" description="ATLF-like" evidence="2">
    <location>
        <begin position="35"/>
        <end position="220"/>
    </location>
</feature>
<feature type="region of interest" description="Interacts with substrate peptide" evidence="6">
    <location>
        <begin position="101"/>
        <end position="103"/>
    </location>
</feature>
<feature type="region of interest" description="Interacts with substrate peptide" evidence="6">
    <location>
        <begin position="117"/>
        <end position="119"/>
    </location>
</feature>
<feature type="active site" description="Proton acceptor" evidence="2 14 15">
    <location>
        <position position="143"/>
    </location>
</feature>
<feature type="binding site" evidence="2 6">
    <location>
        <position position="142"/>
    </location>
    <ligand>
        <name>Zn(2+)</name>
        <dbReference type="ChEBI" id="CHEBI:29105"/>
        <note>catalytic</note>
    </ligand>
</feature>
<feature type="binding site" evidence="2 6">
    <location>
        <position position="146"/>
    </location>
    <ligand>
        <name>Zn(2+)</name>
        <dbReference type="ChEBI" id="CHEBI:29105"/>
        <note>catalytic</note>
    </ligand>
</feature>
<feature type="binding site" evidence="2">
    <location>
        <position position="178"/>
    </location>
    <ligand>
        <name>Zn(2+)</name>
        <dbReference type="ChEBI" id="CHEBI:29105"/>
        <note>catalytic</note>
    </ligand>
</feature>
<feature type="binding site" evidence="2 6">
    <location>
        <position position="185"/>
    </location>
    <ligand>
        <name>Zn(2+)</name>
        <dbReference type="ChEBI" id="CHEBI:29105"/>
        <note>catalytic</note>
    </ligand>
</feature>
<feature type="site" description="Interacts with substrate peptide" evidence="6">
    <location>
        <position position="135"/>
    </location>
</feature>
<feature type="site" description="Interacts with substrate peptide" evidence="6">
    <location>
        <position position="142"/>
    </location>
</feature>
<feature type="site" description="Transition state stabilizer" evidence="15">
    <location>
        <position position="178"/>
    </location>
</feature>
<feature type="mutagenesis site" description="Becomes unable to cleave VNPPVP, nor is able to cleave PLPPVP, the optimal substrate peptide for PPEP-2 from P.alvei." evidence="9">
    <original>GGST</original>
    <variation>SERV</variation>
    <location>
        <begin position="117"/>
        <end position="120"/>
    </location>
</feature>
<feature type="mutagenesis site" description="Still able to bind zinc. Highly reduced activity on fibronectin. Loss of activity on fibrinogen. Shows a surprising 18% residual proteolytic activity on a substrate peptide. Total loss of proteolytic activity; when associated with F-178." evidence="4 6">
    <original>E</original>
    <variation>A</variation>
    <location>
        <position position="143"/>
    </location>
</feature>
<feature type="mutagenesis site" description="Not able to bind zinc. Highly reduced activity on fibronectin. Loss of activity on fibrinogen." evidence="4">
    <original>H</original>
    <variation>A</variation>
    <location>
        <position position="146"/>
    </location>
</feature>
<feature type="mutagenesis site" description="Shows a surprising 41% residual proteolytic activity on a substrate peptide. Total loss of proteolytic activity; when associated with A-143." evidence="6">
    <original>Y</original>
    <variation>F</variation>
    <location>
        <position position="178"/>
    </location>
</feature>
<feature type="helix" evidence="19">
    <location>
        <begin position="28"/>
        <end position="38"/>
    </location>
</feature>
<feature type="turn" evidence="19">
    <location>
        <begin position="39"/>
        <end position="41"/>
    </location>
</feature>
<feature type="strand" evidence="17">
    <location>
        <begin position="46"/>
        <end position="48"/>
    </location>
</feature>
<feature type="helix" evidence="19">
    <location>
        <begin position="51"/>
        <end position="61"/>
    </location>
</feature>
<feature type="helix" evidence="19">
    <location>
        <begin position="66"/>
        <end position="74"/>
    </location>
</feature>
<feature type="strand" evidence="19">
    <location>
        <begin position="79"/>
        <end position="84"/>
    </location>
</feature>
<feature type="helix" evidence="19">
    <location>
        <begin position="86"/>
        <end position="88"/>
    </location>
</feature>
<feature type="helix" evidence="19">
    <location>
        <begin position="90"/>
        <end position="95"/>
    </location>
</feature>
<feature type="turn" evidence="20">
    <location>
        <begin position="104"/>
        <end position="107"/>
    </location>
</feature>
<feature type="helix" evidence="19">
    <location>
        <begin position="110"/>
        <end position="112"/>
    </location>
</feature>
<feature type="strand" evidence="19">
    <location>
        <begin position="114"/>
        <end position="124"/>
    </location>
</feature>
<feature type="turn" evidence="16">
    <location>
        <begin position="125"/>
        <end position="127"/>
    </location>
</feature>
<feature type="strand" evidence="19">
    <location>
        <begin position="132"/>
        <end position="134"/>
    </location>
</feature>
<feature type="strand" evidence="18">
    <location>
        <begin position="136"/>
        <end position="138"/>
    </location>
</feature>
<feature type="helix" evidence="19">
    <location>
        <begin position="139"/>
        <end position="151"/>
    </location>
</feature>
<feature type="strand" evidence="19">
    <location>
        <begin position="153"/>
        <end position="155"/>
    </location>
</feature>
<feature type="helix" evidence="19">
    <location>
        <begin position="156"/>
        <end position="158"/>
    </location>
</feature>
<feature type="helix" evidence="19">
    <location>
        <begin position="160"/>
        <end position="169"/>
    </location>
</feature>
<feature type="turn" evidence="19">
    <location>
        <begin position="170"/>
        <end position="173"/>
    </location>
</feature>
<feature type="turn" evidence="19">
    <location>
        <begin position="176"/>
        <end position="181"/>
    </location>
</feature>
<feature type="helix" evidence="19">
    <location>
        <begin position="183"/>
        <end position="196"/>
    </location>
</feature>
<feature type="helix" evidence="19">
    <location>
        <begin position="198"/>
        <end position="207"/>
    </location>
</feature>
<feature type="helix" evidence="19">
    <location>
        <begin position="209"/>
        <end position="219"/>
    </location>
</feature>
<comment type="function">
    <text evidence="4 5 7 8">Zinc-dependent endoprotease with a unique preference for proline residues surrounding the scissile bond. Exhibits a high preference for an asparagine at the P2 position and hydrophobic residues (Val, Ile, Leu) at the P3 position. Efficiently cleaves the LPXTG cell surface proteins CD630_28310 and CD630_32460 at multiple cleavage sites in vivo. Has a role in the regulation of C.difficile adhesion versus motility by cleaving surface adhesion proteins such as the collagen binding protein CD630_28310, and is important for efficient infection. Is also able to cleave fibronectin and fibrinogen in vitro; cleaves at the N-terminus of the beta-chain of fibrinogen. Destabilizes the fibronectin network produced by human fibroblasts. Therefore, may be important in key steps of clostridial pathogenesis by degrading extracellular matrix components associated with the gut epithelial cells. To a lesser extent, IgA1, IgA2, and human HSP 90-beta, but not HSP 90-alpha, are also substrates for the enzyme. Is not active on different collagen types, casein and gelatin.</text>
</comment>
<comment type="catalytic activity">
    <reaction evidence="5 8">
        <text>The enzyme catalyzes the hydrolytic cleavage of peptide bonds between two proline residues.</text>
        <dbReference type="EC" id="3.4.24.89"/>
    </reaction>
</comment>
<comment type="cofactor">
    <cofactor evidence="2 4 5">
        <name>Zn(2+)</name>
        <dbReference type="ChEBI" id="CHEBI:29105"/>
    </cofactor>
    <text evidence="2 4 5 6">Binds 1 zinc ion per subunit.</text>
</comment>
<comment type="activity regulation">
    <text evidence="5">Is inhibited by the chelating agent o-phenanthroline in vitro.</text>
</comment>
<comment type="biophysicochemical properties">
    <kinetics>
        <KM evidence="5">77 uM for synthetic FRET peptide DabcylLys-EVNPPPPD-EdansGlu</KM>
        <Vmax evidence="5">0.08 nmol/sec/ug enzyme with synthetic FRET peptide DabcylLys-EVNPPPPD-EdansGlu as substrate</Vmax>
        <text evidence="5">kcat is 19 sec(-1) with synthetic FRET peptide DabcylLys-EVNPPPPD-EdansGlu as substrate.</text>
    </kinetics>
</comment>
<comment type="subunit">
    <text evidence="9">Monomer.</text>
</comment>
<comment type="subcellular location">
    <subcellularLocation>
        <location evidence="4 5 8">Secreted</location>
    </subcellularLocation>
</comment>
<comment type="induction">
    <text evidence="3">Expression is controlled by a type I c-diGMP riboswitch; elevated levels of c-diGMP repress transcription of zmp1.</text>
</comment>
<comment type="domain">
    <text evidence="6">The structure of Zmp1 is similar to anthrax lethal factor (LF) metalloprotease domain IV. The S-loop of Zmp1 undergoes large motions upon substrate binding and seems to exhibit a function analogous to that of LF domain III, thus contributing to sequence specificity and substrate binding. An aliphatic-aromatic network and the diverting loop contribute to Pro-Pro specificity.</text>
</comment>
<comment type="disruption phenotype">
    <text evidence="8">Cells lacking this gene retain CD630_28310 on the cell surface, show higher affinity for collagen type I with attenuated virulence in a hamster model of infection.</text>
</comment>
<comment type="similarity">
    <text evidence="13">Belongs to the peptidase M34 family. Pro-Pro endopeptidase subfamily.</text>
</comment>
<organism>
    <name type="scientific">Clostridioides difficile (strain 630)</name>
    <name type="common">Peptoclostridium difficile</name>
    <dbReference type="NCBI Taxonomy" id="272563"/>
    <lineage>
        <taxon>Bacteria</taxon>
        <taxon>Bacillati</taxon>
        <taxon>Bacillota</taxon>
        <taxon>Clostridia</taxon>
        <taxon>Peptostreptococcales</taxon>
        <taxon>Peptostreptococcaceae</taxon>
        <taxon>Clostridioides</taxon>
    </lineage>
</organism>
<name>PPEP1_CLOD6</name>
<accession>Q183R7</accession>
<gene>
    <name evidence="10" type="primary">zmp1</name>
    <name evidence="12" type="synonym">ppep-1</name>
    <name type="ordered locus">CD630_28300</name>
</gene>
<keyword id="KW-0002">3D-structure</keyword>
<keyword id="KW-0378">Hydrolase</keyword>
<keyword id="KW-0479">Metal-binding</keyword>
<keyword id="KW-0482">Metalloprotease</keyword>
<keyword id="KW-0645">Protease</keyword>
<keyword id="KW-1185">Reference proteome</keyword>
<keyword id="KW-0964">Secreted</keyword>
<keyword id="KW-0732">Signal</keyword>
<keyword id="KW-0843">Virulence</keyword>
<keyword id="KW-0862">Zinc</keyword>
<proteinExistence type="evidence at protein level"/>
<reference key="1">
    <citation type="journal article" date="2006" name="Nat. Genet.">
        <title>The multidrug-resistant human pathogen Clostridium difficile has a highly mobile, mosaic genome.</title>
        <authorList>
            <person name="Sebaihia M."/>
            <person name="Wren B.W."/>
            <person name="Mullany P."/>
            <person name="Fairweather N.F."/>
            <person name="Minton N."/>
            <person name="Stabler R."/>
            <person name="Thomson N.R."/>
            <person name="Roberts A.P."/>
            <person name="Cerdeno-Tarraga A.M."/>
            <person name="Wang H."/>
            <person name="Holden M.T.G."/>
            <person name="Wright A."/>
            <person name="Churcher C."/>
            <person name="Quail M.A."/>
            <person name="Baker S."/>
            <person name="Bason N."/>
            <person name="Brooks K."/>
            <person name="Chillingworth T."/>
            <person name="Cronin A."/>
            <person name="Davis P."/>
            <person name="Dowd L."/>
            <person name="Fraser A."/>
            <person name="Feltwell T."/>
            <person name="Hance Z."/>
            <person name="Holroyd S."/>
            <person name="Jagels K."/>
            <person name="Moule S."/>
            <person name="Mungall K."/>
            <person name="Price C."/>
            <person name="Rabbinowitsch E."/>
            <person name="Sharp S."/>
            <person name="Simmonds M."/>
            <person name="Stevens K."/>
            <person name="Unwin L."/>
            <person name="Whithead S."/>
            <person name="Dupuy B."/>
            <person name="Dougan G."/>
            <person name="Barrell B."/>
            <person name="Parkhill J."/>
        </authorList>
    </citation>
    <scope>NUCLEOTIDE SEQUENCE [LARGE SCALE GENOMIC DNA]</scope>
    <source>
        <strain>630</strain>
    </source>
</reference>
<reference key="2">
    <citation type="journal article" date="2013" name="PLoS Genet.">
        <title>Genome-wide identification of regulatory RNAs in the human pathogen Clostridium difficile.</title>
        <authorList>
            <person name="Soutourina O.A."/>
            <person name="Monot M."/>
            <person name="Boudry P."/>
            <person name="Saujet L."/>
            <person name="Pichon C."/>
            <person name="Sismeiro O."/>
            <person name="Semenova E."/>
            <person name="Severinov K."/>
            <person name="Le Bouguenec C."/>
            <person name="Coppee J.Y."/>
            <person name="Dupuy B."/>
            <person name="Martin-Verstraete I."/>
        </authorList>
    </citation>
    <scope>INDUCTION</scope>
    <source>
        <strain>630</strain>
    </source>
</reference>
<reference key="3">
    <citation type="journal article" date="2013" name="PLoS ONE">
        <title>Identification of a novel zinc metalloprotease through a global analysis of Clostridium difficile extracellular proteins.</title>
        <authorList>
            <person name="Cafardi V."/>
            <person name="Biagini M."/>
            <person name="Martinelli M."/>
            <person name="Leuzzi R."/>
            <person name="Rubino J.T."/>
            <person name="Cantini F."/>
            <person name="Norais N."/>
            <person name="Scarselli M."/>
            <person name="Serruto D."/>
            <person name="Unnikrishnan M."/>
        </authorList>
    </citation>
    <scope>IDENTIFICATION BY MASS SPECTROMETRY</scope>
    <scope>GENE NAME</scope>
    <scope>FUNCTION</scope>
    <scope>COFACTOR</scope>
    <scope>SUBSTRATE SPECIFICITY</scope>
    <scope>SUBCELLULAR LOCATION</scope>
    <scope>ACTIVE SITE</scope>
    <scope>MUTAGENESIS OF GLU-143 AND HIS-146</scope>
    <source>
        <strain>630</strain>
    </source>
</reference>
<reference key="4">
    <citation type="journal article" date="2014" name="Mol. Cell. Proteomics">
        <title>A novel secreted metalloprotease (CD2830) from Clostridium difficile cleaves specific proline sequences in LPXTG cell surface proteins.</title>
        <authorList>
            <person name="Hensbergen P.J."/>
            <person name="Klychnikov O.I."/>
            <person name="Bakker D."/>
            <person name="van Winden V.J."/>
            <person name="Ras N."/>
            <person name="Kemp A.C."/>
            <person name="Cordfunke R.A."/>
            <person name="Dragan I."/>
            <person name="Deelder A.M."/>
            <person name="Kuijper E.J."/>
            <person name="Corver J."/>
            <person name="Drijfhout J.W."/>
            <person name="van Leeuwen H.C."/>
        </authorList>
    </citation>
    <scope>IDENTIFICATION BY MASS SPECTROMETRY</scope>
    <scope>FUNCTION</scope>
    <scope>CATALYTIC ACTIVITY</scope>
    <scope>COFACTOR</scope>
    <scope>SUBSTRATE SPECIFICITY</scope>
    <scope>CLEAVAGE MOTIF</scope>
    <scope>KINETIC PARAMETERS</scope>
    <scope>ACTIVITY REGULATION</scope>
    <scope>SUBCELLULAR LOCATION</scope>
    <source>
        <strain>630</strain>
    </source>
</reference>
<reference key="5">
    <citation type="journal article" date="2015" name="FEBS Lett.">
        <title>Clostridium difficile secreted Pro-Pro endopeptidase PPEP-1 (ZMP1/CD2830) modulates adhesion through cleavage of the collagen binding protein CD2831.</title>
        <authorList>
            <person name="Hensbergen P.J."/>
            <person name="Klychnikov O.I."/>
            <person name="Bakker D."/>
            <person name="Dragan I."/>
            <person name="Kelly M.L."/>
            <person name="Minton N.P."/>
            <person name="Corver J."/>
            <person name="Kuijper E.J."/>
            <person name="Drijfhout J.W."/>
            <person name="van Leeuwen H.C."/>
        </authorList>
    </citation>
    <scope>FUNCTION</scope>
    <scope>CATALYTIC ACTIVITY</scope>
    <scope>SUBSTRATE SPECIFICITY</scope>
    <scope>DISRUPTION PHENOTYPE</scope>
    <scope>SUBCELLULAR LOCATION</scope>
    <source>
        <strain>630</strain>
    </source>
</reference>
<reference key="6">
    <citation type="journal article" date="2015" name="J. Biol. Chem.">
        <title>Cyclic diGMP regulates production of sortase substrates of Clostridium difficile and their surface exposure through ZmpI protease-mediated cleavage.</title>
        <authorList>
            <person name="Peltier J."/>
            <person name="Shaw H.A."/>
            <person name="Couchman E.C."/>
            <person name="Dawson L.F."/>
            <person name="Yu L."/>
            <person name="Choudhary J.S."/>
            <person name="Kaever V."/>
            <person name="Wren B.W."/>
            <person name="Fairweather N.F."/>
        </authorList>
    </citation>
    <scope>FUNCTION</scope>
    <source>
        <strain>630</strain>
    </source>
</reference>
<reference key="7">
    <citation type="journal article" date="2017" name="Mol. Microbiol.">
        <title>Covalent attachment and Pro-Pro endopeptidase (PPEP-1)-mediated release of Clostridium difficile cell surface proteins involved in adhesion.</title>
        <authorList>
            <person name="Corver J."/>
            <person name="Cordo' V."/>
            <person name="van Leeuwen H.C."/>
            <person name="Klychnikov O.I."/>
            <person name="Hensbergen P.J."/>
        </authorList>
    </citation>
    <scope>REVIEW</scope>
</reference>
<reference key="8">
    <citation type="journal article" date="2018" name="J. Biol. Chem.">
        <title>Discovery of a new Pro-Pro endopeptidase, PPEP-2, provides mechanistic insights into the differences in substrate specificity within the PPEP family.</title>
        <authorList>
            <person name="Klychnikov O.I."/>
            <person name="Shamorkina T.M."/>
            <person name="Weeks S.D."/>
            <person name="van Leeuwen H.C."/>
            <person name="Corver J."/>
            <person name="Drijfhout J.W."/>
            <person name="van Veelen P.A."/>
            <person name="Sluchanko N.N."/>
            <person name="Strelkov S.V."/>
            <person name="Hensbergen P.J."/>
        </authorList>
    </citation>
    <scope>SUBUNIT</scope>
    <scope>MUTAGENESIS OF 117-GLY--THR-120</scope>
    <source>
        <strain>630</strain>
    </source>
</reference>
<reference key="9">
    <citation type="journal article" date="2015" name="Structure">
        <title>Structural basis of proline-proline peptide bond specificity of the metalloprotease Zmp1 implicated in motility of Clostridium difficile.</title>
        <authorList>
            <person name="Schacherl M."/>
            <person name="Pichlo C."/>
            <person name="Neundorf I."/>
            <person name="Baumann U."/>
        </authorList>
    </citation>
    <scope>X-RAY CRYSTALLOGRAPHY (1.25 ANGSTROMS) OF 27-220 OF WILD-TYPE AND MUTANTS ALA-143 AND ALA-143/PHE-178 IN COMPLEXES WITH ZINC AND SUBSTRATE PEPTIDE</scope>
    <scope>ACTIVE SITE</scope>
    <scope>DOMAIN</scope>
    <scope>MUTAGENESIS OF GLU-143 AND TYR-178</scope>
    <source>
        <strain>630</strain>
    </source>
</reference>
<protein>
    <recommendedName>
        <fullName evidence="11">Pro-Pro endopeptidase</fullName>
        <shortName evidence="11">PPEP-1</shortName>
        <ecNumber evidence="5 8">3.4.24.89</ecNumber>
    </recommendedName>
    <alternativeName>
        <fullName evidence="10">Zinc metalloprotease Zmp1</fullName>
    </alternativeName>
</protein>